<reference key="1">
    <citation type="journal article" date="2007" name="PLoS Genet.">
        <title>Genome analysis of Minibacterium massiliensis highlights the convergent evolution of water-living bacteria.</title>
        <authorList>
            <person name="Audic S."/>
            <person name="Robert C."/>
            <person name="Campagna B."/>
            <person name="Parinello H."/>
            <person name="Claverie J.-M."/>
            <person name="Raoult D."/>
            <person name="Drancourt M."/>
        </authorList>
    </citation>
    <scope>NUCLEOTIDE SEQUENCE [LARGE SCALE GENOMIC DNA]</scope>
    <source>
        <strain>Marseille</strain>
    </source>
</reference>
<dbReference type="EC" id="2.5.1.19" evidence="1"/>
<dbReference type="EMBL" id="CP000269">
    <property type="protein sequence ID" value="ABR88781.1"/>
    <property type="molecule type" value="Genomic_DNA"/>
</dbReference>
<dbReference type="RefSeq" id="WP_012080521.1">
    <property type="nucleotide sequence ID" value="NC_009659.1"/>
</dbReference>
<dbReference type="SMR" id="A6T1G3"/>
<dbReference type="STRING" id="375286.mma_2670"/>
<dbReference type="KEGG" id="mms:mma_2670"/>
<dbReference type="eggNOG" id="COG0128">
    <property type="taxonomic scope" value="Bacteria"/>
</dbReference>
<dbReference type="HOGENOM" id="CLU_024321_0_0_4"/>
<dbReference type="OrthoDB" id="9809920at2"/>
<dbReference type="UniPathway" id="UPA00053">
    <property type="reaction ID" value="UER00089"/>
</dbReference>
<dbReference type="Proteomes" id="UP000006388">
    <property type="component" value="Chromosome"/>
</dbReference>
<dbReference type="GO" id="GO:0005737">
    <property type="term" value="C:cytoplasm"/>
    <property type="evidence" value="ECO:0007669"/>
    <property type="project" value="UniProtKB-SubCell"/>
</dbReference>
<dbReference type="GO" id="GO:0003866">
    <property type="term" value="F:3-phosphoshikimate 1-carboxyvinyltransferase activity"/>
    <property type="evidence" value="ECO:0007669"/>
    <property type="project" value="UniProtKB-UniRule"/>
</dbReference>
<dbReference type="GO" id="GO:0008652">
    <property type="term" value="P:amino acid biosynthetic process"/>
    <property type="evidence" value="ECO:0007669"/>
    <property type="project" value="UniProtKB-KW"/>
</dbReference>
<dbReference type="GO" id="GO:0009073">
    <property type="term" value="P:aromatic amino acid family biosynthetic process"/>
    <property type="evidence" value="ECO:0007669"/>
    <property type="project" value="UniProtKB-KW"/>
</dbReference>
<dbReference type="GO" id="GO:0009423">
    <property type="term" value="P:chorismate biosynthetic process"/>
    <property type="evidence" value="ECO:0007669"/>
    <property type="project" value="UniProtKB-UniRule"/>
</dbReference>
<dbReference type="CDD" id="cd01556">
    <property type="entry name" value="EPSP_synthase"/>
    <property type="match status" value="1"/>
</dbReference>
<dbReference type="FunFam" id="3.65.10.10:FF:000003">
    <property type="entry name" value="3-phosphoshikimate 1-carboxyvinyltransferase"/>
    <property type="match status" value="1"/>
</dbReference>
<dbReference type="FunFam" id="3.65.10.10:FF:000004">
    <property type="entry name" value="3-phosphoshikimate 1-carboxyvinyltransferase"/>
    <property type="match status" value="1"/>
</dbReference>
<dbReference type="Gene3D" id="3.65.10.10">
    <property type="entry name" value="Enolpyruvate transferase domain"/>
    <property type="match status" value="2"/>
</dbReference>
<dbReference type="HAMAP" id="MF_00210">
    <property type="entry name" value="EPSP_synth"/>
    <property type="match status" value="1"/>
</dbReference>
<dbReference type="InterPro" id="IPR001986">
    <property type="entry name" value="Enolpyruvate_Tfrase_dom"/>
</dbReference>
<dbReference type="InterPro" id="IPR036968">
    <property type="entry name" value="Enolpyruvate_Tfrase_sf"/>
</dbReference>
<dbReference type="InterPro" id="IPR006264">
    <property type="entry name" value="EPSP_synthase"/>
</dbReference>
<dbReference type="InterPro" id="IPR023193">
    <property type="entry name" value="EPSP_synthase_CS"/>
</dbReference>
<dbReference type="InterPro" id="IPR013792">
    <property type="entry name" value="RNA3'P_cycl/enolpyr_Trfase_a/b"/>
</dbReference>
<dbReference type="NCBIfam" id="TIGR01356">
    <property type="entry name" value="aroA"/>
    <property type="match status" value="1"/>
</dbReference>
<dbReference type="PANTHER" id="PTHR21090">
    <property type="entry name" value="AROM/DEHYDROQUINATE SYNTHASE"/>
    <property type="match status" value="1"/>
</dbReference>
<dbReference type="PANTHER" id="PTHR21090:SF5">
    <property type="entry name" value="PENTAFUNCTIONAL AROM POLYPEPTIDE"/>
    <property type="match status" value="1"/>
</dbReference>
<dbReference type="Pfam" id="PF00275">
    <property type="entry name" value="EPSP_synthase"/>
    <property type="match status" value="1"/>
</dbReference>
<dbReference type="PIRSF" id="PIRSF000505">
    <property type="entry name" value="EPSPS"/>
    <property type="match status" value="1"/>
</dbReference>
<dbReference type="SUPFAM" id="SSF55205">
    <property type="entry name" value="EPT/RTPC-like"/>
    <property type="match status" value="1"/>
</dbReference>
<dbReference type="PROSITE" id="PS00104">
    <property type="entry name" value="EPSP_SYNTHASE_1"/>
    <property type="match status" value="1"/>
</dbReference>
<dbReference type="PROSITE" id="PS00885">
    <property type="entry name" value="EPSP_SYNTHASE_2"/>
    <property type="match status" value="1"/>
</dbReference>
<keyword id="KW-0028">Amino-acid biosynthesis</keyword>
<keyword id="KW-0057">Aromatic amino acid biosynthesis</keyword>
<keyword id="KW-0963">Cytoplasm</keyword>
<keyword id="KW-0808">Transferase</keyword>
<organism>
    <name type="scientific">Janthinobacterium sp. (strain Marseille)</name>
    <name type="common">Minibacterium massiliensis</name>
    <dbReference type="NCBI Taxonomy" id="375286"/>
    <lineage>
        <taxon>Bacteria</taxon>
        <taxon>Pseudomonadati</taxon>
        <taxon>Pseudomonadota</taxon>
        <taxon>Betaproteobacteria</taxon>
        <taxon>Burkholderiales</taxon>
        <taxon>Oxalobacteraceae</taxon>
        <taxon>Janthinobacterium</taxon>
    </lineage>
</organism>
<feature type="chain" id="PRO_0000325353" description="3-phosphoshikimate 1-carboxyvinyltransferase">
    <location>
        <begin position="1"/>
        <end position="441"/>
    </location>
</feature>
<feature type="active site" description="Proton acceptor" evidence="1">
    <location>
        <position position="320"/>
    </location>
</feature>
<feature type="binding site" evidence="1">
    <location>
        <position position="26"/>
    </location>
    <ligand>
        <name>3-phosphoshikimate</name>
        <dbReference type="ChEBI" id="CHEBI:145989"/>
    </ligand>
</feature>
<feature type="binding site" evidence="1">
    <location>
        <position position="26"/>
    </location>
    <ligand>
        <name>phosphoenolpyruvate</name>
        <dbReference type="ChEBI" id="CHEBI:58702"/>
    </ligand>
</feature>
<feature type="binding site" evidence="1">
    <location>
        <position position="27"/>
    </location>
    <ligand>
        <name>3-phosphoshikimate</name>
        <dbReference type="ChEBI" id="CHEBI:145989"/>
    </ligand>
</feature>
<feature type="binding site" evidence="1">
    <location>
        <position position="31"/>
    </location>
    <ligand>
        <name>3-phosphoshikimate</name>
        <dbReference type="ChEBI" id="CHEBI:145989"/>
    </ligand>
</feature>
<feature type="binding site" evidence="1">
    <location>
        <position position="99"/>
    </location>
    <ligand>
        <name>phosphoenolpyruvate</name>
        <dbReference type="ChEBI" id="CHEBI:58702"/>
    </ligand>
</feature>
<feature type="binding site" evidence="1">
    <location>
        <position position="127"/>
    </location>
    <ligand>
        <name>phosphoenolpyruvate</name>
        <dbReference type="ChEBI" id="CHEBI:58702"/>
    </ligand>
</feature>
<feature type="binding site" evidence="1">
    <location>
        <position position="173"/>
    </location>
    <ligand>
        <name>3-phosphoshikimate</name>
        <dbReference type="ChEBI" id="CHEBI:145989"/>
    </ligand>
</feature>
<feature type="binding site" evidence="1">
    <location>
        <position position="174"/>
    </location>
    <ligand>
        <name>3-phosphoshikimate</name>
        <dbReference type="ChEBI" id="CHEBI:145989"/>
    </ligand>
</feature>
<feature type="binding site" evidence="1">
    <location>
        <position position="175"/>
    </location>
    <ligand>
        <name>3-phosphoshikimate</name>
        <dbReference type="ChEBI" id="CHEBI:145989"/>
    </ligand>
</feature>
<feature type="binding site" evidence="1">
    <location>
        <position position="175"/>
    </location>
    <ligand>
        <name>phosphoenolpyruvate</name>
        <dbReference type="ChEBI" id="CHEBI:58702"/>
    </ligand>
</feature>
<feature type="binding site" evidence="1">
    <location>
        <position position="203"/>
    </location>
    <ligand>
        <name>3-phosphoshikimate</name>
        <dbReference type="ChEBI" id="CHEBI:145989"/>
    </ligand>
</feature>
<feature type="binding site" evidence="1">
    <location>
        <position position="320"/>
    </location>
    <ligand>
        <name>3-phosphoshikimate</name>
        <dbReference type="ChEBI" id="CHEBI:145989"/>
    </ligand>
</feature>
<feature type="binding site" evidence="1">
    <location>
        <position position="347"/>
    </location>
    <ligand>
        <name>3-phosphoshikimate</name>
        <dbReference type="ChEBI" id="CHEBI:145989"/>
    </ligand>
</feature>
<feature type="binding site" evidence="1">
    <location>
        <position position="351"/>
    </location>
    <ligand>
        <name>phosphoenolpyruvate</name>
        <dbReference type="ChEBI" id="CHEBI:58702"/>
    </ligand>
</feature>
<feature type="binding site" evidence="1">
    <location>
        <position position="393"/>
    </location>
    <ligand>
        <name>phosphoenolpyruvate</name>
        <dbReference type="ChEBI" id="CHEBI:58702"/>
    </ligand>
</feature>
<feature type="binding site" evidence="1">
    <location>
        <position position="423"/>
    </location>
    <ligand>
        <name>phosphoenolpyruvate</name>
        <dbReference type="ChEBI" id="CHEBI:58702"/>
    </ligand>
</feature>
<gene>
    <name evidence="1" type="primary">aroA</name>
    <name type="ordered locus">mma_2670</name>
</gene>
<protein>
    <recommendedName>
        <fullName evidence="1">3-phosphoshikimate 1-carboxyvinyltransferase</fullName>
        <ecNumber evidence="1">2.5.1.19</ecNumber>
    </recommendedName>
    <alternativeName>
        <fullName evidence="1">5-enolpyruvylshikimate-3-phosphate synthase</fullName>
        <shortName evidence="1">EPSP synthase</shortName>
        <shortName evidence="1">EPSPS</shortName>
    </alternativeName>
</protein>
<sequence length="441" mass="48053">MKHYPHYLDLKPAMHAKGVVRLPGSKSISNRTLLLAALAQGTTHIRDLLASDDTHVMLMALQKLGVKWEQIGESQDYIVHGVDGSFPVHQADLFMGNAGTAIRPLTAALAVTGGDYTLHGVSRMHERPIGDLVDALNAIGTHIEYTGEPGYPPLHIQRGRIHAHEMSVRGNVSSQFLTALLMAAPLMTREQDVIINVIGDLISKPYIEITLNLIQRFGVEVQRNGWQSFTIKAGQRYISPGNIHVEGDASSASYFLAAGAIAGGPVRVEGVGRDSIQGDVRFVEALEQMGATVRMGDNWIEAESNGVLRAIDADFNHIPDAAMTIAVAALYADGPSILRNIGSWRVKETDRISAMATELRKLGAIVEEGEDYLKVTPPAEILSAAIDTYDDHRMAMCFSLATLDGAARRGNKERINDPQCVAKTFPEYFEAFAKVTEESLF</sequence>
<evidence type="ECO:0000255" key="1">
    <source>
        <dbReference type="HAMAP-Rule" id="MF_00210"/>
    </source>
</evidence>
<accession>A6T1G3</accession>
<name>AROA_JANMA</name>
<proteinExistence type="inferred from homology"/>
<comment type="function">
    <text evidence="1">Catalyzes the transfer of the enolpyruvyl moiety of phosphoenolpyruvate (PEP) to the 5-hydroxyl of shikimate-3-phosphate (S3P) to produce enolpyruvyl shikimate-3-phosphate and inorganic phosphate.</text>
</comment>
<comment type="catalytic activity">
    <reaction evidence="1">
        <text>3-phosphoshikimate + phosphoenolpyruvate = 5-O-(1-carboxyvinyl)-3-phosphoshikimate + phosphate</text>
        <dbReference type="Rhea" id="RHEA:21256"/>
        <dbReference type="ChEBI" id="CHEBI:43474"/>
        <dbReference type="ChEBI" id="CHEBI:57701"/>
        <dbReference type="ChEBI" id="CHEBI:58702"/>
        <dbReference type="ChEBI" id="CHEBI:145989"/>
        <dbReference type="EC" id="2.5.1.19"/>
    </reaction>
    <physiologicalReaction direction="left-to-right" evidence="1">
        <dbReference type="Rhea" id="RHEA:21257"/>
    </physiologicalReaction>
</comment>
<comment type="pathway">
    <text evidence="1">Metabolic intermediate biosynthesis; chorismate biosynthesis; chorismate from D-erythrose 4-phosphate and phosphoenolpyruvate: step 6/7.</text>
</comment>
<comment type="subunit">
    <text evidence="1">Monomer.</text>
</comment>
<comment type="subcellular location">
    <subcellularLocation>
        <location evidence="1">Cytoplasm</location>
    </subcellularLocation>
</comment>
<comment type="similarity">
    <text evidence="1">Belongs to the EPSP synthase family.</text>
</comment>